<proteinExistence type="predicted"/>
<organism>
    <name type="scientific">Escherichia coli</name>
    <dbReference type="NCBI Taxonomy" id="562"/>
    <lineage>
        <taxon>Bacteria</taxon>
        <taxon>Pseudomonadati</taxon>
        <taxon>Pseudomonadota</taxon>
        <taxon>Gammaproteobacteria</taxon>
        <taxon>Enterobacterales</taxon>
        <taxon>Enterobacteriaceae</taxon>
        <taxon>Escherichia</taxon>
    </lineage>
</organism>
<accession>P62534</accession>
<accession>P21317</accession>
<keyword id="KW-0814">Transposable element</keyword>
<sequence>MAIEGAAATVPLSPGERLNGLNHIAELRAKVFGLNIESELERFIKDMRDPRDINNEQNKRALAAIFFMAKIPAERHSISINELTTDEKRELIKAMNHFRAVVSLFPRRLTMPN</sequence>
<dbReference type="EMBL" id="M55249">
    <property type="protein sequence ID" value="AAA23394.1"/>
    <property type="molecule type" value="Genomic_DNA"/>
</dbReference>
<dbReference type="PIR" id="JQ0858">
    <property type="entry name" value="JQ0858"/>
</dbReference>
<dbReference type="RefSeq" id="WP_000963473.1">
    <property type="nucleotide sequence ID" value="NZ_WXYX01000001.1"/>
</dbReference>
<dbReference type="eggNOG" id="ENOG50336D7">
    <property type="taxonomic scope" value="Bacteria"/>
</dbReference>
<dbReference type="OMA" id="LNHIAML"/>
<dbReference type="InterPro" id="IPR035232">
    <property type="entry name" value="DUF5347"/>
</dbReference>
<dbReference type="Pfam" id="PF17282">
    <property type="entry name" value="DUF5347"/>
    <property type="match status" value="1"/>
</dbReference>
<reference key="1">
    <citation type="journal article" date="1990" name="Proc. Natl. Acad. Sci. U.S.A.">
        <title>Retron for the 67-base multicopy single-stranded DNA from Escherichia coli: a potential transposable element encoding both reverse transcriptase and Dam methylase functions.</title>
        <authorList>
            <person name="Hsu M.-Y."/>
            <person name="Inouye M."/>
            <person name="Inouye S."/>
        </authorList>
    </citation>
    <scope>NUCLEOTIDE SEQUENCE [GENOMIC DNA]</scope>
    <source>
        <strain>O1:NM / CL-1</strain>
    </source>
</reference>
<protein>
    <recommendedName>
        <fullName evidence="1">Protein ORFc in retron Ec67</fullName>
    </recommendedName>
</protein>
<evidence type="ECO:0000303" key="1">
    <source>
    </source>
</evidence>
<feature type="chain" id="PRO_0000066456" description="Protein ORFc in retron Ec67">
    <location>
        <begin position="1"/>
        <end position="113"/>
    </location>
</feature>
<name>YR7C_ECOLX</name>